<name>PPAT_STAAM</name>
<comment type="cofactor">
    <cofactor evidence="1">
        <name>pyridoxal 5'-phosphate</name>
        <dbReference type="ChEBI" id="CHEBI:597326"/>
    </cofactor>
</comment>
<comment type="subunit">
    <text evidence="1">Homodimer.</text>
</comment>
<comment type="similarity">
    <text evidence="2">Belongs to the class-II pyridoxal-phosphate-dependent aminotransferase family.</text>
</comment>
<comment type="sequence caution" evidence="2">
    <conflict type="erroneous initiation">
        <sequence resource="EMBL-CDS" id="BAB56712"/>
    </conflict>
</comment>
<accession>P60121</accession>
<accession>Q99W59</accession>
<protein>
    <recommendedName>
        <fullName>Putative pyridoxal phosphate-dependent acyltransferase</fullName>
        <ecNumber>2.3.1.-</ecNumber>
    </recommendedName>
</protein>
<gene>
    <name type="ordered locus">SAV0550</name>
</gene>
<dbReference type="EC" id="2.3.1.-"/>
<dbReference type="EMBL" id="BA000017">
    <property type="protein sequence ID" value="BAB56712.1"/>
    <property type="status" value="ALT_INIT"/>
    <property type="molecule type" value="Genomic_DNA"/>
</dbReference>
<dbReference type="RefSeq" id="WP_000250823.1">
    <property type="nucleotide sequence ID" value="NC_002758.2"/>
</dbReference>
<dbReference type="SMR" id="P60121"/>
<dbReference type="KEGG" id="sav:SAV0550"/>
<dbReference type="HOGENOM" id="CLU_015846_11_0_9"/>
<dbReference type="PhylomeDB" id="P60121"/>
<dbReference type="Proteomes" id="UP000002481">
    <property type="component" value="Chromosome"/>
</dbReference>
<dbReference type="GO" id="GO:0030170">
    <property type="term" value="F:pyridoxal phosphate binding"/>
    <property type="evidence" value="ECO:0007669"/>
    <property type="project" value="InterPro"/>
</dbReference>
<dbReference type="GO" id="GO:0016740">
    <property type="term" value="F:transferase activity"/>
    <property type="evidence" value="ECO:0007669"/>
    <property type="project" value="UniProtKB-KW"/>
</dbReference>
<dbReference type="GO" id="GO:0009058">
    <property type="term" value="P:biosynthetic process"/>
    <property type="evidence" value="ECO:0007669"/>
    <property type="project" value="InterPro"/>
</dbReference>
<dbReference type="CDD" id="cd06454">
    <property type="entry name" value="KBL_like"/>
    <property type="match status" value="1"/>
</dbReference>
<dbReference type="FunFam" id="3.40.640.10:FF:000006">
    <property type="entry name" value="5-aminolevulinate synthase, mitochondrial"/>
    <property type="match status" value="1"/>
</dbReference>
<dbReference type="Gene3D" id="3.90.1150.10">
    <property type="entry name" value="Aspartate Aminotransferase, domain 1"/>
    <property type="match status" value="1"/>
</dbReference>
<dbReference type="Gene3D" id="3.40.640.10">
    <property type="entry name" value="Type I PLP-dependent aspartate aminotransferase-like (Major domain)"/>
    <property type="match status" value="1"/>
</dbReference>
<dbReference type="InterPro" id="IPR001917">
    <property type="entry name" value="Aminotrans_II_pyridoxalP_BS"/>
</dbReference>
<dbReference type="InterPro" id="IPR004839">
    <property type="entry name" value="Aminotransferase_I/II_large"/>
</dbReference>
<dbReference type="InterPro" id="IPR050087">
    <property type="entry name" value="AON_synthase_class-II"/>
</dbReference>
<dbReference type="InterPro" id="IPR010962">
    <property type="entry name" value="AONS_Archaea/Firmicutes"/>
</dbReference>
<dbReference type="InterPro" id="IPR015424">
    <property type="entry name" value="PyrdxlP-dep_Trfase"/>
</dbReference>
<dbReference type="InterPro" id="IPR015421">
    <property type="entry name" value="PyrdxlP-dep_Trfase_major"/>
</dbReference>
<dbReference type="InterPro" id="IPR015422">
    <property type="entry name" value="PyrdxlP-dep_Trfase_small"/>
</dbReference>
<dbReference type="NCBIfam" id="TIGR01825">
    <property type="entry name" value="gly_Cac_T_rel"/>
    <property type="match status" value="1"/>
</dbReference>
<dbReference type="NCBIfam" id="NF005394">
    <property type="entry name" value="PRK06939.1"/>
    <property type="match status" value="1"/>
</dbReference>
<dbReference type="PANTHER" id="PTHR13693">
    <property type="entry name" value="CLASS II AMINOTRANSFERASE/8-AMINO-7-OXONONANOATE SYNTHASE"/>
    <property type="match status" value="1"/>
</dbReference>
<dbReference type="PANTHER" id="PTHR13693:SF3">
    <property type="entry name" value="LD36009P"/>
    <property type="match status" value="1"/>
</dbReference>
<dbReference type="Pfam" id="PF00155">
    <property type="entry name" value="Aminotran_1_2"/>
    <property type="match status" value="1"/>
</dbReference>
<dbReference type="SUPFAM" id="SSF53383">
    <property type="entry name" value="PLP-dependent transferases"/>
    <property type="match status" value="1"/>
</dbReference>
<dbReference type="PROSITE" id="PS00599">
    <property type="entry name" value="AA_TRANSFER_CLASS_2"/>
    <property type="match status" value="1"/>
</dbReference>
<feature type="chain" id="PRO_0000163838" description="Putative pyridoxal phosphate-dependent acyltransferase">
    <location>
        <begin position="1"/>
        <end position="395"/>
    </location>
</feature>
<feature type="binding site" evidence="1">
    <location>
        <begin position="110"/>
        <end position="111"/>
    </location>
    <ligand>
        <name>pyridoxal 5'-phosphate</name>
        <dbReference type="ChEBI" id="CHEBI:597326"/>
    </ligand>
</feature>
<feature type="binding site" evidence="1">
    <location>
        <position position="135"/>
    </location>
    <ligand>
        <name>substrate</name>
    </ligand>
</feature>
<feature type="binding site" evidence="1">
    <location>
        <position position="185"/>
    </location>
    <ligand>
        <name>pyridoxal 5'-phosphate</name>
        <dbReference type="ChEBI" id="CHEBI:597326"/>
    </ligand>
</feature>
<feature type="binding site" evidence="1">
    <location>
        <begin position="210"/>
        <end position="213"/>
    </location>
    <ligand>
        <name>pyridoxal 5'-phosphate</name>
        <dbReference type="ChEBI" id="CHEBI:597326"/>
    </ligand>
</feature>
<feature type="binding site" evidence="1">
    <location>
        <begin position="240"/>
        <end position="243"/>
    </location>
    <ligand>
        <name>pyridoxal 5'-phosphate</name>
        <dbReference type="ChEBI" id="CHEBI:597326"/>
    </ligand>
</feature>
<feature type="binding site" evidence="1">
    <location>
        <position position="357"/>
    </location>
    <ligand>
        <name>substrate</name>
    </ligand>
</feature>
<feature type="modified residue" description="N6-(pyridoxal phosphate)lysine" evidence="2">
    <location>
        <position position="243"/>
    </location>
</feature>
<sequence length="395" mass="42892">MVQSLHEFLEENINYLKENGLYNEIDTIEGANGPEIKINGKSYINLSSNNYLGLATNEDLKSAAKAAIDTHGVGAGAVRTINGTLDLHDELEETLAKFKGTEAAIAYQSGFNCNMAAISAVMNKNDAILSDELNHASIIDGCRLSKAKIIRVNHSDMDDLRAKAKEAVESGQYNKVMYITDGVFSMDGDVAKLPEIVEIAEEFGLLTYVDDAHGSGVMGKGAGTVKHFGLQDKIDFQIGTLSKAIGVVGGYVAGTKELIDWLKAQSRPFLFSTSLAPGDTKAITEAVKKLMDSTELHDKLWDNAQYLKNGLSKLGYDTGESETPITPVIIGDEKTTQEFSKRLKDEGVYVKSIVFPTVPRGTGRVRNMPTAAHTKDMLDEAIAAYEKVGKEMKLI</sequence>
<proteinExistence type="inferred from homology"/>
<keyword id="KW-0663">Pyridoxal phosphate</keyword>
<keyword id="KW-0808">Transferase</keyword>
<evidence type="ECO:0000250" key="1"/>
<evidence type="ECO:0000305" key="2"/>
<reference key="1">
    <citation type="journal article" date="2001" name="Lancet">
        <title>Whole genome sequencing of meticillin-resistant Staphylococcus aureus.</title>
        <authorList>
            <person name="Kuroda M."/>
            <person name="Ohta T."/>
            <person name="Uchiyama I."/>
            <person name="Baba T."/>
            <person name="Yuzawa H."/>
            <person name="Kobayashi I."/>
            <person name="Cui L."/>
            <person name="Oguchi A."/>
            <person name="Aoki K."/>
            <person name="Nagai Y."/>
            <person name="Lian J.-Q."/>
            <person name="Ito T."/>
            <person name="Kanamori M."/>
            <person name="Matsumaru H."/>
            <person name="Maruyama A."/>
            <person name="Murakami H."/>
            <person name="Hosoyama A."/>
            <person name="Mizutani-Ui Y."/>
            <person name="Takahashi N.K."/>
            <person name="Sawano T."/>
            <person name="Inoue R."/>
            <person name="Kaito C."/>
            <person name="Sekimizu K."/>
            <person name="Hirakawa H."/>
            <person name="Kuhara S."/>
            <person name="Goto S."/>
            <person name="Yabuzaki J."/>
            <person name="Kanehisa M."/>
            <person name="Yamashita A."/>
            <person name="Oshima K."/>
            <person name="Furuya K."/>
            <person name="Yoshino C."/>
            <person name="Shiba T."/>
            <person name="Hattori M."/>
            <person name="Ogasawara N."/>
            <person name="Hayashi H."/>
            <person name="Hiramatsu K."/>
        </authorList>
    </citation>
    <scope>NUCLEOTIDE SEQUENCE [LARGE SCALE GENOMIC DNA]</scope>
    <source>
        <strain>Mu50 / ATCC 700699</strain>
    </source>
</reference>
<organism>
    <name type="scientific">Staphylococcus aureus (strain Mu50 / ATCC 700699)</name>
    <dbReference type="NCBI Taxonomy" id="158878"/>
    <lineage>
        <taxon>Bacteria</taxon>
        <taxon>Bacillati</taxon>
        <taxon>Bacillota</taxon>
        <taxon>Bacilli</taxon>
        <taxon>Bacillales</taxon>
        <taxon>Staphylococcaceae</taxon>
        <taxon>Staphylococcus</taxon>
    </lineage>
</organism>